<dbReference type="EMBL" id="FJ494914">
    <property type="protein sequence ID" value="ACR15111.1"/>
    <property type="molecule type" value="Genomic_DNA"/>
</dbReference>
<dbReference type="PDB" id="1E9W">
    <property type="method" value="X-ray"/>
    <property type="resolution" value="1.02 A"/>
    <property type="chains" value="A=56-72"/>
</dbReference>
<dbReference type="PDB" id="1OLN">
    <property type="method" value="Other"/>
    <property type="chains" value="B=56-72"/>
</dbReference>
<dbReference type="PDB" id="2JQ7">
    <property type="method" value="NMR"/>
    <property type="chains" value="C=56-72"/>
</dbReference>
<dbReference type="PDB" id="2L2W">
    <property type="method" value="NMR"/>
    <property type="chains" value="A=56-72"/>
</dbReference>
<dbReference type="PDB" id="2L2X">
    <property type="method" value="NMR"/>
    <property type="chains" value="A=56-71"/>
</dbReference>
<dbReference type="PDB" id="2L2Y">
    <property type="method" value="NMR"/>
    <property type="chains" value="A=56-71"/>
</dbReference>
<dbReference type="PDB" id="2L2Z">
    <property type="method" value="NMR"/>
    <property type="chains" value="A=56-72"/>
</dbReference>
<dbReference type="PDB" id="3CF5">
    <property type="method" value="X-ray"/>
    <property type="resolution" value="3.30 A"/>
    <property type="chains" value="5=56-72"/>
</dbReference>
<dbReference type="PDB" id="4HP2">
    <property type="method" value="X-ray"/>
    <property type="resolution" value="0.64 A"/>
    <property type="chains" value="A/B=56-72"/>
</dbReference>
<dbReference type="PDB" id="5D8H">
    <property type="method" value="X-ray"/>
    <property type="resolution" value="2.80 A"/>
    <property type="chains" value="D=56-72"/>
</dbReference>
<dbReference type="PDB" id="6MXF">
    <property type="method" value="EM"/>
    <property type="resolution" value="1.91 A"/>
    <property type="chains" value="A=56-72"/>
</dbReference>
<dbReference type="PDBsum" id="1E9W"/>
<dbReference type="PDBsum" id="1OLN"/>
<dbReference type="PDBsum" id="2JQ7"/>
<dbReference type="PDBsum" id="2L2W"/>
<dbReference type="PDBsum" id="2L2X"/>
<dbReference type="PDBsum" id="2L2Y"/>
<dbReference type="PDBsum" id="2L2Z"/>
<dbReference type="PDBsum" id="3CF5"/>
<dbReference type="PDBsum" id="4HP2"/>
<dbReference type="PDBsum" id="5D8H"/>
<dbReference type="PDBsum" id="6MXF"/>
<dbReference type="EMDB" id="EMD-9292"/>
<dbReference type="SMR" id="P0C8P8"/>
<dbReference type="DrugBank" id="DB02940">
    <property type="generic name" value="(4s)-2-[(1e)-1-Aminoprop-1-Enyl]-4,5-Dihydro-1,3-Thiazole-4-Carboxylic Acid"/>
</dbReference>
<dbReference type="DrugBank" id="DB02566">
    <property type="generic name" value="8-Hydroxy-4-(1-Hydroxyethyl)Quinoline-2-Carboxylic Acid"/>
</dbReference>
<dbReference type="EvolutionaryTrace" id="P0C8P8"/>
<dbReference type="GO" id="GO:0005576">
    <property type="term" value="C:extracellular region"/>
    <property type="evidence" value="ECO:0007669"/>
    <property type="project" value="UniProtKB-SubCell"/>
</dbReference>
<dbReference type="GO" id="GO:0042742">
    <property type="term" value="P:defense response to bacterium"/>
    <property type="evidence" value="ECO:0007669"/>
    <property type="project" value="UniProtKB-KW"/>
</dbReference>
<dbReference type="InterPro" id="IPR023895">
    <property type="entry name" value="Thiopep_bacteriocin_prcur"/>
</dbReference>
<dbReference type="NCBIfam" id="NF033401">
    <property type="entry name" value="thiazolyl_BerA"/>
    <property type="match status" value="1"/>
</dbReference>
<dbReference type="NCBIfam" id="TIGR03892">
    <property type="entry name" value="thiopep_precurs"/>
    <property type="match status" value="1"/>
</dbReference>
<keyword id="KW-0002">3D-structure</keyword>
<keyword id="KW-0027">Amidation</keyword>
<keyword id="KW-0044">Antibiotic</keyword>
<keyword id="KW-0929">Antimicrobial</keyword>
<keyword id="KW-0379">Hydroxylation</keyword>
<keyword id="KW-0488">Methylation</keyword>
<keyword id="KW-0582">Pharmaceutical</keyword>
<keyword id="KW-0964">Secreted</keyword>
<keyword id="KW-0883">Thioether bond</keyword>
<name>THCL_STRAJ</name>
<feature type="propeptide" id="PRO_0000414718">
    <location>
        <begin position="1"/>
        <end position="55"/>
    </location>
</feature>
<feature type="peptide" id="PRO_0000363170" description="Thiostrepton">
    <location>
        <begin position="56"/>
        <end position="72"/>
    </location>
</feature>
<feature type="modified residue" description="2,3-didehydroalanine (Ser)" evidence="3">
    <location>
        <position position="58"/>
    </location>
</feature>
<feature type="modified residue" description="(Z)-2,3-didehydrobutyrine" evidence="3">
    <location>
        <position position="63"/>
    </location>
</feature>
<feature type="modified residue" description="(3S,4R)-3,4-dihydroxyisoleucine" evidence="2">
    <location>
        <position position="65"/>
    </location>
</feature>
<feature type="modified residue" description="2,3-didehydroalanine (Ser)" evidence="3">
    <location>
        <position position="71"/>
    </location>
</feature>
<feature type="modified residue" description="2,3-didehydroalanine (Ser)" evidence="3">
    <location>
        <position position="72"/>
    </location>
</feature>
<feature type="modified residue" description="Serine amide" evidence="3">
    <location>
        <position position="72"/>
    </location>
</feature>
<feature type="cross-link" description="4-(1-hydroxyethyl)-7-isoleucino-2-(threonin-O3-ylcarbonyl)-7,8-dihydroquinolin-8-ol (Ile-Thr)">
    <location>
        <begin position="56"/>
        <end position="67"/>
    </location>
</feature>
<feature type="cross-link" description="5-amino-piperideine-2,5-dicarboxylic acid (Ser-Ser) (with C-68)">
    <location>
        <begin position="60"/>
        <end position="69"/>
    </location>
</feature>
<feature type="cross-link" description="5-amino-piperideine-2,5-dicarboxylic acid (Ser-Cys) (with S-69)">
    <location>
        <begin position="60"/>
        <end position="68"/>
    </location>
</feature>
<feature type="cross-link" description="Thiazole-4-carboxylic acid (Ser-Cys)">
    <location>
        <begin position="60"/>
        <end position="61"/>
    </location>
</feature>
<feature type="cross-link" description="(4S)-thiazoline-4-carboxylic acid (Thr-Cys)">
    <location>
        <begin position="63"/>
        <end position="64"/>
    </location>
</feature>
<feature type="cross-link" description="Thiazole-4-carboxylic acid (Ile-Cys)">
    <location>
        <begin position="65"/>
        <end position="66"/>
    </location>
</feature>
<feature type="cross-link" description="Thiazole-4-carboxylic acid (Thr-Cys)">
    <location>
        <begin position="67"/>
        <end position="68"/>
    </location>
</feature>
<feature type="cross-link" description="Thiazole-4-carboxylic acid (Ser-Cys)">
    <location>
        <begin position="69"/>
        <end position="70"/>
    </location>
</feature>
<protein>
    <recommendedName>
        <fullName>Thiostrepton</fullName>
    </recommendedName>
    <alternativeName>
        <fullName>Alaninamide</fullName>
    </alternativeName>
    <alternativeName>
        <fullName>Bryamycin</fullName>
    </alternativeName>
    <alternativeName>
        <fullName>Gargon</fullName>
    </alternativeName>
    <alternativeName>
        <fullName>Thiactin</fullName>
    </alternativeName>
</protein>
<evidence type="ECO:0000250" key="1"/>
<evidence type="ECO:0000269" key="2">
    <source>
    </source>
</evidence>
<evidence type="ECO:0000269" key="3">
    <source>
    </source>
</evidence>
<evidence type="ECO:0000305" key="4"/>
<organism>
    <name type="scientific">Streptomyces azureus</name>
    <dbReference type="NCBI Taxonomy" id="146537"/>
    <lineage>
        <taxon>Bacteria</taxon>
        <taxon>Bacillati</taxon>
        <taxon>Actinomycetota</taxon>
        <taxon>Actinomycetes</taxon>
        <taxon>Kitasatosporales</taxon>
        <taxon>Streptomycetaceae</taxon>
        <taxon>Streptomyces</taxon>
    </lineage>
</organism>
<reference key="1">
    <citation type="journal article" date="2009" name="J. Am. Chem. Soc.">
        <title>Ribosomally synthesized thiopeptide antibiotics targeting elongation factor Tu.</title>
        <authorList>
            <person name="Morris R.P."/>
            <person name="Leeds J.A."/>
            <person name="Naegeli H.U."/>
            <person name="Oberer L."/>
            <person name="Memmert K."/>
            <person name="Weber E."/>
            <person name="LaMarche M.J."/>
            <person name="Parker C.N."/>
            <person name="Burrer N."/>
            <person name="Esterow S."/>
            <person name="Hein A.E."/>
            <person name="Schmitt E.K."/>
            <person name="Krastel P."/>
        </authorList>
    </citation>
    <scope>NUCLEOTIDE SEQUENCE [GENOMIC DNA]</scope>
    <scope>HYDROXYLATION AT ILE-65</scope>
    <source>
        <strain>ATCC 14921 / DSM 40106 / CBS 467.68 / ETH 28555 / JCM 4564 / NBRC 12744 / NRRL B-2655 / VKM Ac-719</strain>
    </source>
</reference>
<reference key="2">
    <citation type="journal article" date="1955" name="Antibiot. Annu.">
        <title>Thiostrepton, a new antibiotic. I. In vitro studies.</title>
        <authorList>
            <person name="Donovick R."/>
            <person name="Pagano J.F."/>
            <person name="Stout H.A."/>
            <person name="Weinstein M.J."/>
        </authorList>
    </citation>
    <scope>CHARACTERIZATION</scope>
</reference>
<reference key="3">
    <citation type="journal article" date="1955" name="Antibiot. Annu.">
        <title>Thiostrepton, a new antibiotic. II. Isolation and chemical characterization.</title>
        <authorList>
            <person name="Dutcher J.D."/>
            <person name="Vandeputte J."/>
        </authorList>
    </citation>
    <scope>CHARACTERIZATION</scope>
</reference>
<reference key="4">
    <citation type="journal article" date="1955" name="Antibiot. Annu.">
        <title>Thiostrepton, a new antibiotic. III. In vivo studies.</title>
        <authorList>
            <person name="Jambor W.P."/>
            <person name="Steinberg B.A."/>
            <person name="Suydam L.O."/>
        </authorList>
    </citation>
    <scope>CHARACTERIZATION</scope>
</reference>
<reference key="5">
    <citation type="journal article" date="1996" name="Bioorg. Med. Chem.">
        <title>Studies on the biosynthesis of thiostrepton: 4-(1-hydroxyethyl)quinoline-2-carboxylate as a free intermediate on the pathway to the quinaldic acid moiety.</title>
        <authorList>
            <person name="Priestley N.D."/>
            <person name="Smith T.M."/>
            <person name="Shipley P.R."/>
            <person name="Floss H.G."/>
        </authorList>
    </citation>
    <scope>BIOSYNTHESIS OF THE QUINOLINE MOIETY</scope>
</reference>
<reference key="6">
    <citation type="journal article" date="2005" name="J. Am. Chem. Soc.">
        <title>Total synthesis of thiostrepton. Retrosynthetic analysis and construction of key building blocks.</title>
        <authorList>
            <person name="Nicolaou K.C."/>
            <person name="Safina B.S."/>
            <person name="Zak M."/>
            <person name="Lee S.H."/>
            <person name="Nevalainen M."/>
            <person name="Bella M."/>
            <person name="Estrada A.A."/>
            <person name="Funke C."/>
            <person name="Zecri F.J."/>
            <person name="Bulat S."/>
        </authorList>
    </citation>
    <scope>STRUCTURE VERIFICATION BY CHEMICAL SYNTHESIS</scope>
</reference>
<reference key="7">
    <citation type="journal article" date="2005" name="J. Am. Chem. Soc.">
        <title>Total synthesis of thiostrepton. Assembly of key building blocks and completion of the synthesis.</title>
        <authorList>
            <person name="Nicolaou K.C."/>
            <person name="Zak M."/>
            <person name="Safina B.S."/>
            <person name="Estrada A.A."/>
            <person name="Lee S.H."/>
            <person name="Nevalainen M."/>
        </authorList>
    </citation>
    <scope>STRUCTURE VERIFICATION BY CHEMICAL SYNTHESIS</scope>
</reference>
<reference key="8">
    <citation type="journal article" date="1983" name="J. Antibiot.">
        <title>The solution conformation of the peptide antibiotic thiostrepton: a 1H NMR study.</title>
        <authorList>
            <person name="Hensens O.D."/>
            <person name="Albers-Schonberg G."/>
            <person name="Anderson B.F."/>
        </authorList>
    </citation>
    <scope>STRUCTURE BY NMR OF 56-72</scope>
    <scope>AMIDATION AT SER-72</scope>
    <scope>DEHYDRATION AT SER-58; THR-63; SER-71 AND SER-72</scope>
</reference>
<reference key="9">
    <citation type="journal article" date="1983" name="J. Antibiot.">
        <title>13C NMR study of thiostrepton and thiopeptin components.</title>
        <authorList>
            <person name="Hensens O.D."/>
            <person name="Albers-Schonberg G."/>
        </authorList>
    </citation>
    <scope>STRUCTURE BY NMR OF 56-72</scope>
</reference>
<reference key="10">
    <citation type="journal article" date="2001" name="Acta Crystallogr. D">
        <title>Structure of the macrocycle thiostrepton solved using the anomalous dispersion contribution of sulfur.</title>
        <authorList>
            <person name="Bond C.S."/>
            <person name="Shaw M.P."/>
            <person name="Alphey M.S."/>
            <person name="Hunter W.N."/>
        </authorList>
    </citation>
    <scope>X-RAY CRYSTALLOGRAPHY (1.02 ANGSTROMS) OF 56-72</scope>
</reference>
<sequence>MDATAIHERWSVMSNASIGQEIGVEGLTGLDVDALEISDYVDETLLDGEDLTVTMIASASCTTCICTCSCSS</sequence>
<proteinExistence type="evidence at protein level"/>
<accession>P0C8P8</accession>
<accession>C4NCM0</accession>
<comment type="function">
    <text evidence="1">Has bacteriocidal activity. Inhibits bacterial protein biosynthesis by acting on the elongation factor Tu (EF-Tu) (By similarity).</text>
</comment>
<comment type="subcellular location">
    <subcellularLocation>
        <location evidence="1">Secreted</location>
    </subcellularLocation>
</comment>
<comment type="PTM">
    <text>Maturation of thiazole and oxazole containing antibiotics involves the enzymatic condensation of a Cys, Ser or Thr with the alpha-carbonyl of the preceding amino acid to form a thioether or ether bond, then dehydration to form a double bond with the alpha-amino nitrogen. Thiazoline or oxazoline ring are dehydrogenated to form thiazole or oxazole rings.</text>
</comment>
<comment type="PTM">
    <text>Maturation of pyridinyl containing antibiotics involves the cross-linking of a Ser and a Cys-Ser pair usually separated by 7 or 8 residues along the peptide chain. The Ser residues are dehydrated to didehydroalanines, then bonded between their beta carbons. The alpha carbonyl of the Cys condenses with alpha carbon of the first Ser to form a pyridinyl ring. The ring may be multiply dehydrogenated to form a pyridine ring with loss of the amino nitrogen of the first Ser.</text>
</comment>
<comment type="PTM">
    <text evidence="4">The amidation of Ser-72 probably does not occur by the same mechanism, oxidative cleavage of glycine, as in eukaryotes.</text>
</comment>
<comment type="PTM">
    <text>The structure of the 2,3-didehydrobutyrin is shown to be Z-isomer (PubMed:11320328, PubMed:6885635).</text>
</comment>
<comment type="pharmaceutical">
    <text>Available under the names Animax (Dechra) and Panolog (Fort Dodge), that combine thiostrepton with nystatin (antifungal), neomycin (antibiotic) and triamcinolone (corticosteroid). Used to treat cat and dog skin and ear disorders caused by allergies, or bacterial as well as yeast infections. It is also used for infections of the anal gland and interdigital cysts.</text>
</comment>
<comment type="similarity">
    <text evidence="4">Belongs to the thiocillin family.</text>
</comment>
<comment type="caution">
    <text evidence="4">Thiostrepton is produced by Streptomyces azureus ATCC 14921, S.hawaiiensis ATCC 12236, and by S.laurentii ATCC 31255. The species used as a thiostrepton producer in all studies is uncertain.</text>
</comment>
<comment type="caution">
    <text evidence="4">It is uncertain whether Met-1 or Met-13 is the initiator.</text>
</comment>
<comment type="online information" name="Wikipedia">
    <link uri="https://en.wikipedia.org/wiki/Thiostrepton"/>
    <text>Thiostrepton entry</text>
</comment>
<gene>
    <name type="primary">tpdA</name>
</gene>